<feature type="chain" id="PRO_0000312762" description="Radial spoke head protein 6 homolog A">
    <location>
        <begin position="1"/>
        <end position="526"/>
    </location>
</feature>
<feature type="region of interest" description="Disordered" evidence="2">
    <location>
        <begin position="180"/>
        <end position="231"/>
    </location>
</feature>
<feature type="region of interest" description="Disordered" evidence="2">
    <location>
        <begin position="371"/>
        <end position="411"/>
    </location>
</feature>
<feature type="region of interest" description="Disordered" evidence="2">
    <location>
        <begin position="469"/>
        <end position="526"/>
    </location>
</feature>
<feature type="compositionally biased region" description="Acidic residues" evidence="2">
    <location>
        <begin position="181"/>
        <end position="212"/>
    </location>
</feature>
<feature type="compositionally biased region" description="Acidic residues" evidence="2">
    <location>
        <begin position="374"/>
        <end position="395"/>
    </location>
</feature>
<feature type="compositionally biased region" description="Basic and acidic residues" evidence="2">
    <location>
        <begin position="497"/>
        <end position="506"/>
    </location>
</feature>
<feature type="compositionally biased region" description="Acidic residues" evidence="2">
    <location>
        <begin position="507"/>
        <end position="526"/>
    </location>
</feature>
<feature type="sequence conflict" description="In Ref. 1; CAJ83446." evidence="3" ref="1">
    <original>A</original>
    <variation>V</variation>
    <location>
        <position position="501"/>
    </location>
</feature>
<feature type="sequence conflict" description="In Ref. 1; CAJ83446." evidence="3" ref="1">
    <location>
        <position position="524"/>
    </location>
</feature>
<name>RSH6A_XENTR</name>
<organism>
    <name type="scientific">Xenopus tropicalis</name>
    <name type="common">Western clawed frog</name>
    <name type="synonym">Silurana tropicalis</name>
    <dbReference type="NCBI Taxonomy" id="8364"/>
    <lineage>
        <taxon>Eukaryota</taxon>
        <taxon>Metazoa</taxon>
        <taxon>Chordata</taxon>
        <taxon>Craniata</taxon>
        <taxon>Vertebrata</taxon>
        <taxon>Euteleostomi</taxon>
        <taxon>Amphibia</taxon>
        <taxon>Batrachia</taxon>
        <taxon>Anura</taxon>
        <taxon>Pipoidea</taxon>
        <taxon>Pipidae</taxon>
        <taxon>Xenopodinae</taxon>
        <taxon>Xenopus</taxon>
        <taxon>Silurana</taxon>
    </lineage>
</organism>
<keyword id="KW-0966">Cell projection</keyword>
<keyword id="KW-0969">Cilium</keyword>
<keyword id="KW-0963">Cytoplasm</keyword>
<keyword id="KW-0206">Cytoskeleton</keyword>
<keyword id="KW-0282">Flagellum</keyword>
<keyword id="KW-1185">Reference proteome</keyword>
<reference key="1">
    <citation type="submission" date="2006-10" db="EMBL/GenBank/DDBJ databases">
        <authorList>
            <consortium name="Sanger Xenopus tropicalis EST/cDNA project"/>
        </authorList>
    </citation>
    <scope>NUCLEOTIDE SEQUENCE [LARGE SCALE MRNA]</scope>
    <source>
        <tissue>Gastrula</tissue>
    </source>
</reference>
<reference key="2">
    <citation type="submission" date="2006-11" db="EMBL/GenBank/DDBJ databases">
        <authorList>
            <consortium name="NIH - Xenopus Gene Collection (XGC) project"/>
        </authorList>
    </citation>
    <scope>NUCLEOTIDE SEQUENCE [LARGE SCALE MRNA]</scope>
    <source>
        <strain>N6</strain>
        <tissue>Oviduct</tissue>
    </source>
</reference>
<proteinExistence type="evidence at transcript level"/>
<protein>
    <recommendedName>
        <fullName>Radial spoke head protein 6 homolog A</fullName>
    </recommendedName>
    <alternativeName>
        <fullName>Radial spoke head-like protein 1</fullName>
    </alternativeName>
</protein>
<gene>
    <name type="primary">rsph6a</name>
    <name type="synonym">rshl1</name>
    <name type="ORF">TGas107g21.1</name>
</gene>
<comment type="function">
    <text evidence="1">Functions as part of radial spoke complexes in the axoneme of sperm flagella that play an important part in motility. The triple radial spokes (RS1, RS2 and RS3) are required to modulate beating of the sperm flagellum.</text>
</comment>
<comment type="subunit">
    <text evidence="1">Component of sperm axonemal radial spoke complexes.</text>
</comment>
<comment type="subcellular location">
    <subcellularLocation>
        <location evidence="1">Cytoplasm</location>
        <location evidence="1">Cytoskeleton</location>
        <location evidence="1">Flagellum axoneme</location>
    </subcellularLocation>
</comment>
<comment type="similarity">
    <text evidence="3">Belongs to the flagellar radial spoke RSP4/6 family.</text>
</comment>
<dbReference type="EMBL" id="CR855771">
    <property type="protein sequence ID" value="CAJ83446.1"/>
    <property type="molecule type" value="mRNA"/>
</dbReference>
<dbReference type="EMBL" id="BC127351">
    <property type="protein sequence ID" value="AAI27352.1"/>
    <property type="molecule type" value="mRNA"/>
</dbReference>
<dbReference type="RefSeq" id="NP_001016760.1">
    <property type="nucleotide sequence ID" value="NM_001016760.2"/>
</dbReference>
<dbReference type="SMR" id="A1L0Z6"/>
<dbReference type="FunCoup" id="A1L0Z6">
    <property type="interactions" value="92"/>
</dbReference>
<dbReference type="STRING" id="8364.ENSXETP00000044949"/>
<dbReference type="PaxDb" id="8364-ENSXETP00000041385"/>
<dbReference type="DNASU" id="549514"/>
<dbReference type="GeneID" id="549514"/>
<dbReference type="KEGG" id="xtr:549514"/>
<dbReference type="AGR" id="Xenbase:XB-GENE-1014690"/>
<dbReference type="CTD" id="81492"/>
<dbReference type="Xenbase" id="XB-GENE-1014690">
    <property type="gene designation" value="rsph6a"/>
</dbReference>
<dbReference type="eggNOG" id="ENOG502QSU4">
    <property type="taxonomic scope" value="Eukaryota"/>
</dbReference>
<dbReference type="InParanoid" id="A1L0Z6"/>
<dbReference type="OrthoDB" id="272202at2759"/>
<dbReference type="TreeFam" id="TF324531"/>
<dbReference type="Proteomes" id="UP000008143">
    <property type="component" value="Chromosome 8"/>
</dbReference>
<dbReference type="GO" id="GO:0031514">
    <property type="term" value="C:motile cilium"/>
    <property type="evidence" value="ECO:0007669"/>
    <property type="project" value="UniProtKB-KW"/>
</dbReference>
<dbReference type="GO" id="GO:0001535">
    <property type="term" value="C:radial spoke head"/>
    <property type="evidence" value="ECO:0000250"/>
    <property type="project" value="UniProtKB"/>
</dbReference>
<dbReference type="GO" id="GO:0060271">
    <property type="term" value="P:cilium assembly"/>
    <property type="evidence" value="ECO:0007669"/>
    <property type="project" value="InterPro"/>
</dbReference>
<dbReference type="GO" id="GO:0060294">
    <property type="term" value="P:cilium movement involved in cell motility"/>
    <property type="evidence" value="ECO:0007669"/>
    <property type="project" value="InterPro"/>
</dbReference>
<dbReference type="CDD" id="cd22963">
    <property type="entry name" value="DD_CrRSP4-like"/>
    <property type="match status" value="1"/>
</dbReference>
<dbReference type="InterPro" id="IPR006802">
    <property type="entry name" value="Radial_spoke"/>
</dbReference>
<dbReference type="PANTHER" id="PTHR13159:SF0">
    <property type="entry name" value="RADIAL SPOKE HEAD 6 HOMOLOG A"/>
    <property type="match status" value="1"/>
</dbReference>
<dbReference type="PANTHER" id="PTHR13159">
    <property type="entry name" value="RADIAL SPOKEHEAD-RELATED"/>
    <property type="match status" value="1"/>
</dbReference>
<dbReference type="Pfam" id="PF04712">
    <property type="entry name" value="Radial_spoke"/>
    <property type="match status" value="1"/>
</dbReference>
<sequence length="526" mass="58497">MTDNAIPGPLDPEELQIQYAKSFLLQTDNSGLSLYEHLSALLSRILSERPPNALEVFESLSAELHWSRLKQGSDVLRAPREESHTCRKAEVQRALFSRGDGEGEESEAEGEMTESPLPNLLDLAHLLQQGGVNLGRDEAVRISLALKRLTDTHPLQVCHFWGKILGSGGSYLVAEVQFREGEDDEAEEGGEEEEKGEVEDDVEEEENEEAEDLPPKSTYRPPPVIPKEENGTGANKHVYYVCSEAGAEWVRLPPVTPAQISAARKIRHLFTGNLDAPVITYPPFPGTEINLLRAQIARISAGTHVSPLGYYQFGEEEGEEEEEGAVRDTYEENPDFEGIPVSELVESLSNWVHHVQHILPQGRCVWVNTSVKSEEEEDEEEAEEEEKEEENEPEPEVGPPLLTPLSEDAEIGQTPPWTAFLSTHLIPHYALAVLRSNLWPGAYTVSSAKKFENIYIGWGLKYMPEGYSPPAPPAPQAEYPSGPEITESTDPTVEEEQALKAAKEEAEAAAEEMEEEEDEEEEEEDD</sequence>
<accession>A1L0Z6</accession>
<accession>Q28D10</accession>
<evidence type="ECO:0000250" key="1">
    <source>
        <dbReference type="UniProtKB" id="Q8CDR2"/>
    </source>
</evidence>
<evidence type="ECO:0000256" key="2">
    <source>
        <dbReference type="SAM" id="MobiDB-lite"/>
    </source>
</evidence>
<evidence type="ECO:0000305" key="3"/>